<dbReference type="EMBL" id="M32473">
    <property type="protein sequence ID" value="AAA49714.1"/>
    <property type="molecule type" value="mRNA"/>
</dbReference>
<dbReference type="PIR" id="C34895">
    <property type="entry name" value="C34895"/>
</dbReference>
<dbReference type="RefSeq" id="NP_001081272.1">
    <property type="nucleotide sequence ID" value="NM_001087803.1"/>
</dbReference>
<dbReference type="SMR" id="P25456"/>
<dbReference type="GeneID" id="397745"/>
<dbReference type="KEGG" id="xla:397745"/>
<dbReference type="AGR" id="Xenbase:XB-GENE-6252610"/>
<dbReference type="CTD" id="397745"/>
<dbReference type="Xenbase" id="XB-GENE-6252610">
    <property type="gene designation" value="42sp43.L"/>
</dbReference>
<dbReference type="OrthoDB" id="2687452at2759"/>
<dbReference type="Proteomes" id="UP000186698">
    <property type="component" value="Chromosome 9_10L"/>
</dbReference>
<dbReference type="Bgee" id="397745">
    <property type="expression patterns" value="Expressed in oocyte and 6 other cell types or tissues"/>
</dbReference>
<dbReference type="GO" id="GO:0005634">
    <property type="term" value="C:nucleus"/>
    <property type="evidence" value="ECO:0000318"/>
    <property type="project" value="GO_Central"/>
</dbReference>
<dbReference type="GO" id="GO:0003723">
    <property type="term" value="F:RNA binding"/>
    <property type="evidence" value="ECO:0007669"/>
    <property type="project" value="UniProtKB-KW"/>
</dbReference>
<dbReference type="GO" id="GO:0008270">
    <property type="term" value="F:zinc ion binding"/>
    <property type="evidence" value="ECO:0007669"/>
    <property type="project" value="UniProtKB-KW"/>
</dbReference>
<dbReference type="Gene3D" id="3.30.160.60">
    <property type="entry name" value="Classic Zinc Finger"/>
    <property type="match status" value="4"/>
</dbReference>
<dbReference type="InterPro" id="IPR054599">
    <property type="entry name" value="TFIIIA_Zfn-C2H2"/>
</dbReference>
<dbReference type="InterPro" id="IPR051061">
    <property type="entry name" value="Zinc_finger_trans_reg"/>
</dbReference>
<dbReference type="InterPro" id="IPR036236">
    <property type="entry name" value="Znf_C2H2_sf"/>
</dbReference>
<dbReference type="InterPro" id="IPR013087">
    <property type="entry name" value="Znf_C2H2_type"/>
</dbReference>
<dbReference type="PANTHER" id="PTHR46179:SF28">
    <property type="entry name" value="SI:DKEY-208K4.2 PROTEIN"/>
    <property type="match status" value="1"/>
</dbReference>
<dbReference type="PANTHER" id="PTHR46179">
    <property type="entry name" value="ZINC FINGER PROTEIN"/>
    <property type="match status" value="1"/>
</dbReference>
<dbReference type="Pfam" id="PF22110">
    <property type="entry name" value="TFIIIA_zf-C2H2"/>
    <property type="match status" value="1"/>
</dbReference>
<dbReference type="Pfam" id="PF00096">
    <property type="entry name" value="zf-C2H2"/>
    <property type="match status" value="4"/>
</dbReference>
<dbReference type="SMART" id="SM00355">
    <property type="entry name" value="ZnF_C2H2"/>
    <property type="match status" value="9"/>
</dbReference>
<dbReference type="SUPFAM" id="SSF57667">
    <property type="entry name" value="beta-beta-alpha zinc fingers"/>
    <property type="match status" value="4"/>
</dbReference>
<dbReference type="PROSITE" id="PS00028">
    <property type="entry name" value="ZINC_FINGER_C2H2_1"/>
    <property type="match status" value="7"/>
</dbReference>
<dbReference type="PROSITE" id="PS50157">
    <property type="entry name" value="ZINC_FINGER_C2H2_2"/>
    <property type="match status" value="7"/>
</dbReference>
<sequence>MKNVGETGPGKCQLLRCPAAGCKAFYRKEGKLQDHMAGHSEQKPWKCGIKDCDKVFARKRQILKHVKRHLALKKLSCPTAGCKMTFSTKKSLSRHKLYKHGEAVPLKCFVPGCKRSFRKKRALRRHLSVHSNEPLSVCDVPGCSWKSSSVAKLVAHQKRHRGYRCSYEGCQTVSPTWTALQTHVKKHPLELQCAACKKPFKKASALRRHKATHAKKPLQLPCPRQDCDKTFSSVFNLTHHVRKLHLCLQTHRCPHSGCTRSFAMRESLLRHLVVHDPERKKLKLKFVRGPSKFLGRGTRCRTPVVEEDLSHLFSRKLLFHFKTRLETNLSGLFNERQLREPAEPEVNLSGLFQRPQGRAKAEKSA</sequence>
<feature type="chain" id="PRO_0000047089" description="P43 5S RNA-binding protein">
    <location>
        <begin position="1"/>
        <end position="365"/>
    </location>
</feature>
<feature type="zinc finger region" description="C2H2-type 1" evidence="1">
    <location>
        <begin position="15"/>
        <end position="39"/>
    </location>
</feature>
<feature type="zinc finger region" description="C2H2-type 2" evidence="1">
    <location>
        <begin position="45"/>
        <end position="69"/>
    </location>
</feature>
<feature type="zinc finger region" description="C2H2-type 3" evidence="1">
    <location>
        <begin position="75"/>
        <end position="100"/>
    </location>
</feature>
<feature type="zinc finger region" description="C2H2-type 4" evidence="1">
    <location>
        <begin position="106"/>
        <end position="130"/>
    </location>
</feature>
<feature type="zinc finger region" description="C2H2-type 5" evidence="1">
    <location>
        <begin position="136"/>
        <end position="160"/>
    </location>
</feature>
<feature type="zinc finger region" description="C2H2-type 6" evidence="1">
    <location>
        <begin position="163"/>
        <end position="187"/>
    </location>
</feature>
<feature type="zinc finger region" description="C2H2-type 7" evidence="1">
    <location>
        <begin position="191"/>
        <end position="213"/>
    </location>
</feature>
<feature type="zinc finger region" description="C2H2-type 8" evidence="1">
    <location>
        <begin position="220"/>
        <end position="245"/>
    </location>
</feature>
<feature type="zinc finger region" description="C2H2-type 9" evidence="1">
    <location>
        <begin position="251"/>
        <end position="275"/>
    </location>
</feature>
<protein>
    <recommendedName>
        <fullName>P43 5S RNA-binding protein</fullName>
    </recommendedName>
    <alternativeName>
        <fullName>42S P43</fullName>
    </alternativeName>
    <alternativeName>
        <fullName>Thesaurin-B</fullName>
    </alternativeName>
</protein>
<keyword id="KW-0479">Metal-binding</keyword>
<keyword id="KW-1185">Reference proteome</keyword>
<keyword id="KW-0677">Repeat</keyword>
<keyword id="KW-0694">RNA-binding</keyword>
<keyword id="KW-0862">Zinc</keyword>
<keyword id="KW-0863">Zinc-finger</keyword>
<evidence type="ECO:0000255" key="1">
    <source>
        <dbReference type="PROSITE-ProRule" id="PRU00042"/>
    </source>
</evidence>
<organism>
    <name type="scientific">Xenopus laevis</name>
    <name type="common">African clawed frog</name>
    <dbReference type="NCBI Taxonomy" id="8355"/>
    <lineage>
        <taxon>Eukaryota</taxon>
        <taxon>Metazoa</taxon>
        <taxon>Chordata</taxon>
        <taxon>Craniata</taxon>
        <taxon>Vertebrata</taxon>
        <taxon>Euteleostomi</taxon>
        <taxon>Amphibia</taxon>
        <taxon>Batrachia</taxon>
        <taxon>Anura</taxon>
        <taxon>Pipoidea</taxon>
        <taxon>Pipidae</taxon>
        <taxon>Xenopodinae</taxon>
        <taxon>Xenopus</taxon>
        <taxon>Xenopus</taxon>
    </lineage>
</organism>
<reference key="1">
    <citation type="journal article" date="1990" name="Cell">
        <title>A finger protein structurally similar to TFIIIA that binds exclusively to 5S RNA in Xenopus.</title>
        <authorList>
            <person name="Joho K.E."/>
            <person name="Darby M.K."/>
            <person name="Crawford E.T."/>
            <person name="Brown D.D."/>
        </authorList>
    </citation>
    <scope>NUCLEOTIDE SEQUENCE [MRNA]</scope>
</reference>
<comment type="function">
    <text>p43 is a 5S RNA binding protein which is a major constituent of oocytes and comprises part of a 42S ribonucleoprotein storage particle.</text>
</comment>
<comment type="subunit">
    <text>The 42S RNP particle comprises four subunits each of which contains one molecule of 5S RNA, three molecules of tRNA, two molecules of p50 (EF1-alpha) and one molecule of the 5S RNA binding protein 43.</text>
</comment>
<accession>P25456</accession>
<name>P43_XENLA</name>
<proteinExistence type="evidence at transcript level"/>